<protein>
    <recommendedName>
        <fullName evidence="1">Cyclic pyranopterin monophosphate synthase</fullName>
        <ecNumber evidence="1">4.6.1.17</ecNumber>
    </recommendedName>
    <alternativeName>
        <fullName evidence="1">Molybdenum cofactor biosynthesis protein C</fullName>
    </alternativeName>
</protein>
<accession>Q3SL94</accession>
<reference key="1">
    <citation type="journal article" date="2006" name="J. Bacteriol.">
        <title>The genome sequence of the obligately chemolithoautotrophic, facultatively anaerobic bacterium Thiobacillus denitrificans.</title>
        <authorList>
            <person name="Beller H.R."/>
            <person name="Chain P.S."/>
            <person name="Letain T.E."/>
            <person name="Chakicherla A."/>
            <person name="Larimer F.W."/>
            <person name="Richardson P.M."/>
            <person name="Coleman M.A."/>
            <person name="Wood A.P."/>
            <person name="Kelly D.P."/>
        </authorList>
    </citation>
    <scope>NUCLEOTIDE SEQUENCE [LARGE SCALE GENOMIC DNA]</scope>
    <source>
        <strain>ATCC 25259 / T1</strain>
    </source>
</reference>
<feature type="chain" id="PRO_1000054156" description="Cyclic pyranopterin monophosphate synthase">
    <location>
        <begin position="1"/>
        <end position="159"/>
    </location>
</feature>
<feature type="active site" evidence="1">
    <location>
        <position position="128"/>
    </location>
</feature>
<feature type="binding site" evidence="1">
    <location>
        <begin position="75"/>
        <end position="77"/>
    </location>
    <ligand>
        <name>substrate</name>
    </ligand>
</feature>
<feature type="binding site" evidence="1">
    <location>
        <begin position="113"/>
        <end position="114"/>
    </location>
    <ligand>
        <name>substrate</name>
    </ligand>
</feature>
<gene>
    <name evidence="1" type="primary">moaC</name>
    <name type="ordered locus">Tbd_0569</name>
</gene>
<name>MOAC_THIDA</name>
<organism>
    <name type="scientific">Thiobacillus denitrificans (strain ATCC 25259 / T1)</name>
    <dbReference type="NCBI Taxonomy" id="292415"/>
    <lineage>
        <taxon>Bacteria</taxon>
        <taxon>Pseudomonadati</taxon>
        <taxon>Pseudomonadota</taxon>
        <taxon>Betaproteobacteria</taxon>
        <taxon>Nitrosomonadales</taxon>
        <taxon>Thiobacillaceae</taxon>
        <taxon>Thiobacillus</taxon>
    </lineage>
</organism>
<dbReference type="EC" id="4.6.1.17" evidence="1"/>
<dbReference type="EMBL" id="CP000116">
    <property type="protein sequence ID" value="AAZ96522.1"/>
    <property type="molecule type" value="Genomic_DNA"/>
</dbReference>
<dbReference type="RefSeq" id="WP_011311081.1">
    <property type="nucleotide sequence ID" value="NC_007404.1"/>
</dbReference>
<dbReference type="SMR" id="Q3SL94"/>
<dbReference type="STRING" id="292415.Tbd_0569"/>
<dbReference type="KEGG" id="tbd:Tbd_0569"/>
<dbReference type="eggNOG" id="COG0315">
    <property type="taxonomic scope" value="Bacteria"/>
</dbReference>
<dbReference type="HOGENOM" id="CLU_074693_1_1_4"/>
<dbReference type="OrthoDB" id="9794429at2"/>
<dbReference type="UniPathway" id="UPA00344"/>
<dbReference type="Proteomes" id="UP000008291">
    <property type="component" value="Chromosome"/>
</dbReference>
<dbReference type="GO" id="GO:0061799">
    <property type="term" value="F:cyclic pyranopterin monophosphate synthase activity"/>
    <property type="evidence" value="ECO:0007669"/>
    <property type="project" value="UniProtKB-UniRule"/>
</dbReference>
<dbReference type="GO" id="GO:0006777">
    <property type="term" value="P:Mo-molybdopterin cofactor biosynthetic process"/>
    <property type="evidence" value="ECO:0007669"/>
    <property type="project" value="UniProtKB-UniRule"/>
</dbReference>
<dbReference type="CDD" id="cd01420">
    <property type="entry name" value="MoaC_PE"/>
    <property type="match status" value="1"/>
</dbReference>
<dbReference type="Gene3D" id="3.30.70.640">
    <property type="entry name" value="Molybdopterin cofactor biosynthesis C (MoaC) domain"/>
    <property type="match status" value="1"/>
</dbReference>
<dbReference type="HAMAP" id="MF_01224_B">
    <property type="entry name" value="MoaC_B"/>
    <property type="match status" value="1"/>
</dbReference>
<dbReference type="InterPro" id="IPR023045">
    <property type="entry name" value="MoaC"/>
</dbReference>
<dbReference type="InterPro" id="IPR047594">
    <property type="entry name" value="MoaC_bact/euk"/>
</dbReference>
<dbReference type="InterPro" id="IPR036522">
    <property type="entry name" value="MoaC_sf"/>
</dbReference>
<dbReference type="InterPro" id="IPR050105">
    <property type="entry name" value="MoCo_biosynth_MoaA/MoaC"/>
</dbReference>
<dbReference type="InterPro" id="IPR002820">
    <property type="entry name" value="Mopterin_CF_biosynth-C_dom"/>
</dbReference>
<dbReference type="NCBIfam" id="TIGR00581">
    <property type="entry name" value="moaC"/>
    <property type="match status" value="1"/>
</dbReference>
<dbReference type="NCBIfam" id="NF006870">
    <property type="entry name" value="PRK09364.1"/>
    <property type="match status" value="1"/>
</dbReference>
<dbReference type="PANTHER" id="PTHR22960:SF29">
    <property type="entry name" value="CYCLIC PYRANOPTERIN MONOPHOSPHATE SYNTHASE"/>
    <property type="match status" value="1"/>
</dbReference>
<dbReference type="PANTHER" id="PTHR22960">
    <property type="entry name" value="MOLYBDOPTERIN COFACTOR SYNTHESIS PROTEIN A"/>
    <property type="match status" value="1"/>
</dbReference>
<dbReference type="Pfam" id="PF01967">
    <property type="entry name" value="MoaC"/>
    <property type="match status" value="1"/>
</dbReference>
<dbReference type="SUPFAM" id="SSF55040">
    <property type="entry name" value="Molybdenum cofactor biosynthesis protein C, MoaC"/>
    <property type="match status" value="1"/>
</dbReference>
<keyword id="KW-0456">Lyase</keyword>
<keyword id="KW-0501">Molybdenum cofactor biosynthesis</keyword>
<keyword id="KW-1185">Reference proteome</keyword>
<comment type="function">
    <text evidence="1">Catalyzes the conversion of (8S)-3',8-cyclo-7,8-dihydroguanosine 5'-triphosphate to cyclic pyranopterin monophosphate (cPMP).</text>
</comment>
<comment type="catalytic activity">
    <reaction evidence="1">
        <text>(8S)-3',8-cyclo-7,8-dihydroguanosine 5'-triphosphate = cyclic pyranopterin phosphate + diphosphate</text>
        <dbReference type="Rhea" id="RHEA:49580"/>
        <dbReference type="ChEBI" id="CHEBI:33019"/>
        <dbReference type="ChEBI" id="CHEBI:59648"/>
        <dbReference type="ChEBI" id="CHEBI:131766"/>
        <dbReference type="EC" id="4.6.1.17"/>
    </reaction>
</comment>
<comment type="pathway">
    <text evidence="1">Cofactor biosynthesis; molybdopterin biosynthesis.</text>
</comment>
<comment type="subunit">
    <text evidence="1">Homohexamer; trimer of dimers.</text>
</comment>
<comment type="similarity">
    <text evidence="1">Belongs to the MoaC family.</text>
</comment>
<sequence>MSEFTHFDESGRAIMVDVAGKDDTRRVATARGAIHMLPDTLGRILGGQAAKGDVLAVARIAAIQATKRTADLIPLCHPIALTRVVVDFAPETEVSRIVCTVTAETVGKTGVEMEALTGVSVALLTIYDMCKAVDRGMQIGDIQLVEKQGGRSGHWRLPD</sequence>
<proteinExistence type="inferred from homology"/>
<evidence type="ECO:0000255" key="1">
    <source>
        <dbReference type="HAMAP-Rule" id="MF_01224"/>
    </source>
</evidence>